<comment type="function">
    <text evidence="1">Involved in mRNA export coupled transcription activation by association with both the AMEX and the SAGA complexes. The SAGA complex is a multiprotein complex that activates transcription by remodeling chromatin and mediating histone acetylation and deubiquitination. Within the SAGA complex, participates in a subcomplex that specifically deubiquitinates histone H2B. The SAGA complex is recruited to specific gene promoters by activators, where it is required for transcription. Required for nuclear receptor-mediated transactivation. Involved in transcription elongation by recruiting the THO complex onto nascent mRNA. The AMEX complex functions in docking export-competent ribonucleoprotein particles (mRNPs) to the nuclear entrance of the nuclear pore complex (nuclear basket). AMEX participates in mRNA export and accurate chromatin positioning in the nucleus by tethering genes to the nuclear periphery (By similarity).</text>
</comment>
<comment type="subunit">
    <text evidence="2">Component of the nuclear pore complex (NPC)-associated AMEX complex (anchoring and mRNA export complex), composed of at least e(y)2 and xmas-2. Component of the SAGA transcription coactivator-HAT complexes, at least composed of Ada2b, e(y)2, Pcaf/Gcn5, Taf10 and Nipped-A/Trrap. Within the SAGA complex, e(y)2, Sgf11, and not/nonstop form an additional subcomplex of SAGA called the DUB module (deubiquitination module). Component of the THO complex, composed of at least e(y)2, HPR1, THO2, THOC5, THOC6 and THOC7. Interacts with e(y)1. Interacts with su(Hw) (via zinc fingers). Interacts with xmas-2; required for localization to the nuclear periphery. Interacts with the nuclear pore complex (NPC).</text>
</comment>
<comment type="subcellular location">
    <subcellularLocation>
        <location evidence="2">Nucleus</location>
        <location evidence="2">Nucleoplasm</location>
    </subcellularLocation>
    <subcellularLocation>
        <location evidence="2">Cytoplasm</location>
    </subcellularLocation>
</comment>
<comment type="similarity">
    <text evidence="2">Belongs to the ENY2 family.</text>
</comment>
<keyword id="KW-0010">Activator</keyword>
<keyword id="KW-0156">Chromatin regulator</keyword>
<keyword id="KW-0963">Cytoplasm</keyword>
<keyword id="KW-0509">mRNA transport</keyword>
<keyword id="KW-0539">Nucleus</keyword>
<keyword id="KW-0653">Protein transport</keyword>
<keyword id="KW-1185">Reference proteome</keyword>
<keyword id="KW-0804">Transcription</keyword>
<keyword id="KW-0805">Transcription regulation</keyword>
<keyword id="KW-0811">Translocation</keyword>
<keyword id="KW-0813">Transport</keyword>
<sequence>MTVSNTVDQYTIMSGDRSKIKDLLCNRLTECGWRDEVRLLCRNILLEKSNSSNGVTVEQLIAEVTPKARTLVPDAVKKELLMKIRTILAENEAEN</sequence>
<dbReference type="EMBL" id="CH940653">
    <property type="protein sequence ID" value="EDW62443.1"/>
    <property type="molecule type" value="Genomic_DNA"/>
</dbReference>
<dbReference type="RefSeq" id="XP_002056957.1">
    <property type="nucleotide sequence ID" value="XM_002056921.4"/>
</dbReference>
<dbReference type="SMR" id="B4M6M6"/>
<dbReference type="FunCoup" id="B4M6M6">
    <property type="interactions" value="1602"/>
</dbReference>
<dbReference type="STRING" id="7244.B4M6M6"/>
<dbReference type="EnsemblMetazoa" id="FBtr0232736">
    <property type="protein sequence ID" value="FBpp0231228"/>
    <property type="gene ID" value="FBgn0203990"/>
</dbReference>
<dbReference type="EnsemblMetazoa" id="XM_002056921.3">
    <property type="protein sequence ID" value="XP_002056957.1"/>
    <property type="gene ID" value="LOC6633785"/>
</dbReference>
<dbReference type="GeneID" id="6633785"/>
<dbReference type="KEGG" id="dvi:6633785"/>
<dbReference type="CTD" id="45848"/>
<dbReference type="eggNOG" id="KOG4479">
    <property type="taxonomic scope" value="Eukaryota"/>
</dbReference>
<dbReference type="HOGENOM" id="CLU_134052_1_1_1"/>
<dbReference type="InParanoid" id="B4M6M6"/>
<dbReference type="OMA" id="RLMCRNI"/>
<dbReference type="OrthoDB" id="6221744at2759"/>
<dbReference type="PhylomeDB" id="B4M6M6"/>
<dbReference type="Proteomes" id="UP000008792">
    <property type="component" value="Unassembled WGS sequence"/>
</dbReference>
<dbReference type="GO" id="GO:0005737">
    <property type="term" value="C:cytoplasm"/>
    <property type="evidence" value="ECO:0007669"/>
    <property type="project" value="UniProtKB-SubCell"/>
</dbReference>
<dbReference type="GO" id="GO:0071819">
    <property type="term" value="C:DUBm complex"/>
    <property type="evidence" value="ECO:0007669"/>
    <property type="project" value="UniProtKB-UniRule"/>
</dbReference>
<dbReference type="GO" id="GO:0005643">
    <property type="term" value="C:nuclear pore"/>
    <property type="evidence" value="ECO:0000250"/>
    <property type="project" value="UniProtKB"/>
</dbReference>
<dbReference type="GO" id="GO:0005654">
    <property type="term" value="C:nucleoplasm"/>
    <property type="evidence" value="ECO:0007669"/>
    <property type="project" value="UniProtKB-SubCell"/>
</dbReference>
<dbReference type="GO" id="GO:0000124">
    <property type="term" value="C:SAGA complex"/>
    <property type="evidence" value="ECO:0000250"/>
    <property type="project" value="UniProtKB"/>
</dbReference>
<dbReference type="GO" id="GO:0070390">
    <property type="term" value="C:transcription export complex 2"/>
    <property type="evidence" value="ECO:0007669"/>
    <property type="project" value="UniProtKB-UniRule"/>
</dbReference>
<dbReference type="GO" id="GO:0043035">
    <property type="term" value="F:chromatin insulator sequence binding"/>
    <property type="evidence" value="ECO:0000250"/>
    <property type="project" value="UniProtKB"/>
</dbReference>
<dbReference type="GO" id="GO:0003713">
    <property type="term" value="F:transcription coactivator activity"/>
    <property type="evidence" value="ECO:0007669"/>
    <property type="project" value="UniProtKB-UniRule"/>
</dbReference>
<dbReference type="GO" id="GO:0006325">
    <property type="term" value="P:chromatin organization"/>
    <property type="evidence" value="ECO:0007669"/>
    <property type="project" value="UniProtKB-KW"/>
</dbReference>
<dbReference type="GO" id="GO:0006406">
    <property type="term" value="P:mRNA export from nucleus"/>
    <property type="evidence" value="ECO:0000250"/>
    <property type="project" value="UniProtKB"/>
</dbReference>
<dbReference type="GO" id="GO:0045944">
    <property type="term" value="P:positive regulation of transcription by RNA polymerase II"/>
    <property type="evidence" value="ECO:0000250"/>
    <property type="project" value="UniProtKB"/>
</dbReference>
<dbReference type="GO" id="GO:0015031">
    <property type="term" value="P:protein transport"/>
    <property type="evidence" value="ECO:0007669"/>
    <property type="project" value="UniProtKB-KW"/>
</dbReference>
<dbReference type="GO" id="GO:0006368">
    <property type="term" value="P:transcription elongation by RNA polymerase II"/>
    <property type="evidence" value="ECO:0007669"/>
    <property type="project" value="UniProtKB-UniRule"/>
</dbReference>
<dbReference type="FunFam" id="1.10.246.140:FF:000002">
    <property type="entry name" value="Enhancer of yellow 2 transcription factor"/>
    <property type="match status" value="1"/>
</dbReference>
<dbReference type="Gene3D" id="1.10.246.140">
    <property type="match status" value="1"/>
</dbReference>
<dbReference type="HAMAP" id="MF_03046">
    <property type="entry name" value="ENY2_Sus1"/>
    <property type="match status" value="1"/>
</dbReference>
<dbReference type="InterPro" id="IPR018783">
    <property type="entry name" value="TF_ENY2"/>
</dbReference>
<dbReference type="InterPro" id="IPR038212">
    <property type="entry name" value="TF_EnY2_sf"/>
</dbReference>
<dbReference type="PANTHER" id="PTHR12514">
    <property type="entry name" value="ENHANCER OF YELLOW 2 TRANSCRIPTION FACTOR"/>
    <property type="match status" value="1"/>
</dbReference>
<dbReference type="Pfam" id="PF10163">
    <property type="entry name" value="EnY2"/>
    <property type="match status" value="1"/>
</dbReference>
<organism>
    <name type="scientific">Drosophila virilis</name>
    <name type="common">Fruit fly</name>
    <dbReference type="NCBI Taxonomy" id="7244"/>
    <lineage>
        <taxon>Eukaryota</taxon>
        <taxon>Metazoa</taxon>
        <taxon>Ecdysozoa</taxon>
        <taxon>Arthropoda</taxon>
        <taxon>Hexapoda</taxon>
        <taxon>Insecta</taxon>
        <taxon>Pterygota</taxon>
        <taxon>Neoptera</taxon>
        <taxon>Endopterygota</taxon>
        <taxon>Diptera</taxon>
        <taxon>Brachycera</taxon>
        <taxon>Muscomorpha</taxon>
        <taxon>Ephydroidea</taxon>
        <taxon>Drosophilidae</taxon>
        <taxon>Drosophila</taxon>
    </lineage>
</organism>
<accession>B4M6M6</accession>
<name>ENY2_DROVI</name>
<protein>
    <recommendedName>
        <fullName evidence="2">Enhancer of yellow 2 transcription factor</fullName>
    </recommendedName>
</protein>
<proteinExistence type="inferred from homology"/>
<gene>
    <name evidence="2" type="primary">e(y)2</name>
    <name type="ORF">GJ16811</name>
</gene>
<reference key="1">
    <citation type="journal article" date="2007" name="Nature">
        <title>Evolution of genes and genomes on the Drosophila phylogeny.</title>
        <authorList>
            <consortium name="Drosophila 12 genomes consortium"/>
        </authorList>
    </citation>
    <scope>NUCLEOTIDE SEQUENCE [LARGE SCALE GENOMIC DNA]</scope>
    <source>
        <strain>Tucson 15010-1051.87</strain>
    </source>
</reference>
<feature type="chain" id="PRO_0000367561" description="Enhancer of yellow 2 transcription factor">
    <location>
        <begin position="1"/>
        <end position="95"/>
    </location>
</feature>
<evidence type="ECO:0000250" key="1"/>
<evidence type="ECO:0000255" key="2">
    <source>
        <dbReference type="HAMAP-Rule" id="MF_03046"/>
    </source>
</evidence>